<keyword id="KW-0025">Alternative splicing</keyword>
<keyword id="KW-0479">Metal-binding</keyword>
<keyword id="KW-1185">Reference proteome</keyword>
<keyword id="KW-0808">Transferase</keyword>
<keyword id="KW-0833">Ubl conjugation pathway</keyword>
<keyword id="KW-0862">Zinc</keyword>
<keyword id="KW-0863">Zinc-finger</keyword>
<evidence type="ECO:0000250" key="1"/>
<evidence type="ECO:0000250" key="2">
    <source>
        <dbReference type="UniProtKB" id="Q6AVN2"/>
    </source>
</evidence>
<evidence type="ECO:0000255" key="3">
    <source>
        <dbReference type="PROSITE-ProRule" id="PRU00175"/>
    </source>
</evidence>
<evidence type="ECO:0000256" key="4">
    <source>
        <dbReference type="SAM" id="MobiDB-lite"/>
    </source>
</evidence>
<evidence type="ECO:0000269" key="5">
    <source>
    </source>
</evidence>
<evidence type="ECO:0000269" key="6">
    <source>
    </source>
</evidence>
<evidence type="ECO:0000303" key="7">
    <source>
    </source>
</evidence>
<evidence type="ECO:0000305" key="8"/>
<evidence type="ECO:0000312" key="9">
    <source>
        <dbReference type="EMBL" id="BAD73651.1"/>
    </source>
</evidence>
<evidence type="ECO:0000312" key="10">
    <source>
        <dbReference type="EMBL" id="BAD73652.1"/>
    </source>
</evidence>
<evidence type="ECO:0000312" key="11">
    <source>
        <dbReference type="EMBL" id="BAF05724.1"/>
    </source>
</evidence>
<evidence type="ECO:0000312" key="12">
    <source>
        <dbReference type="EMBL" id="EAZ13026.1"/>
    </source>
</evidence>
<dbReference type="EC" id="2.3.2.27" evidence="8"/>
<dbReference type="EMBL" id="AP003760">
    <property type="protein sequence ID" value="BAD73651.1"/>
    <property type="molecule type" value="Genomic_DNA"/>
</dbReference>
<dbReference type="EMBL" id="AP003760">
    <property type="protein sequence ID" value="BAD73652.1"/>
    <property type="molecule type" value="Genomic_DNA"/>
</dbReference>
<dbReference type="EMBL" id="AP008207">
    <property type="protein sequence ID" value="BAF05724.1"/>
    <property type="molecule type" value="Genomic_DNA"/>
</dbReference>
<dbReference type="EMBL" id="AP014957">
    <property type="protein sequence ID" value="BAS73592.1"/>
    <property type="molecule type" value="Genomic_DNA"/>
</dbReference>
<dbReference type="EMBL" id="AP014957">
    <property type="protein sequence ID" value="BAS73593.1"/>
    <property type="molecule type" value="Genomic_DNA"/>
</dbReference>
<dbReference type="EMBL" id="CM000138">
    <property type="protein sequence ID" value="EAZ13026.1"/>
    <property type="molecule type" value="Genomic_DNA"/>
</dbReference>
<dbReference type="EMBL" id="AK067662">
    <property type="status" value="NOT_ANNOTATED_CDS"/>
    <property type="molecule type" value="mRNA"/>
</dbReference>
<dbReference type="EMBL" id="AK069011">
    <property type="protein sequence ID" value="BAG91209.1"/>
    <property type="molecule type" value="mRNA"/>
</dbReference>
<dbReference type="RefSeq" id="XP_015615383.1">
    <molecule id="Q5QLR5-2"/>
    <property type="nucleotide sequence ID" value="XM_015759897.1"/>
</dbReference>
<dbReference type="RefSeq" id="XP_015615392.1">
    <molecule id="Q5QLR5-1"/>
    <property type="nucleotide sequence ID" value="XM_015759906.1"/>
</dbReference>
<dbReference type="SMR" id="Q5QLR5"/>
<dbReference type="FunCoup" id="Q5QLR5">
    <property type="interactions" value="1066"/>
</dbReference>
<dbReference type="STRING" id="39947.Q5QLR5"/>
<dbReference type="PaxDb" id="39947-Q5QLR5"/>
<dbReference type="EnsemblPlants" id="Os01t0667700-01">
    <molecule id="Q5QLR5-1"/>
    <property type="protein sequence ID" value="Os01t0667700-01"/>
    <property type="gene ID" value="Os01g0667700"/>
</dbReference>
<dbReference type="EnsemblPlants" id="Os01t0667700-04">
    <molecule id="Q5QLR5-1"/>
    <property type="protein sequence ID" value="Os01t0667700-04"/>
    <property type="gene ID" value="Os01g0667700"/>
</dbReference>
<dbReference type="Gramene" id="Os01t0667700-01">
    <molecule id="Q5QLR5-1"/>
    <property type="protein sequence ID" value="Os01t0667700-01"/>
    <property type="gene ID" value="Os01g0667700"/>
</dbReference>
<dbReference type="Gramene" id="Os01t0667700-04">
    <molecule id="Q5QLR5-1"/>
    <property type="protein sequence ID" value="Os01t0667700-04"/>
    <property type="gene ID" value="Os01g0667700"/>
</dbReference>
<dbReference type="KEGG" id="dosa:Os01g0667700"/>
<dbReference type="KEGG" id="osa:4326322"/>
<dbReference type="eggNOG" id="KOG0800">
    <property type="taxonomic scope" value="Eukaryota"/>
</dbReference>
<dbReference type="InParanoid" id="Q5QLR5"/>
<dbReference type="OMA" id="GIPQWEY"/>
<dbReference type="OrthoDB" id="8062037at2759"/>
<dbReference type="UniPathway" id="UPA00143"/>
<dbReference type="Proteomes" id="UP000000763">
    <property type="component" value="Chromosome 1"/>
</dbReference>
<dbReference type="Proteomes" id="UP000007752">
    <property type="component" value="Chromosome 1"/>
</dbReference>
<dbReference type="Proteomes" id="UP000059680">
    <property type="component" value="Chromosome 1"/>
</dbReference>
<dbReference type="ExpressionAtlas" id="Q5QLR5">
    <property type="expression patterns" value="baseline and differential"/>
</dbReference>
<dbReference type="GO" id="GO:0061630">
    <property type="term" value="F:ubiquitin protein ligase activity"/>
    <property type="evidence" value="ECO:0000318"/>
    <property type="project" value="GO_Central"/>
</dbReference>
<dbReference type="GO" id="GO:0008270">
    <property type="term" value="F:zinc ion binding"/>
    <property type="evidence" value="ECO:0007669"/>
    <property type="project" value="UniProtKB-KW"/>
</dbReference>
<dbReference type="GO" id="GO:0016567">
    <property type="term" value="P:protein ubiquitination"/>
    <property type="evidence" value="ECO:0007669"/>
    <property type="project" value="UniProtKB-UniPathway"/>
</dbReference>
<dbReference type="FunFam" id="3.30.40.10:FF:000467">
    <property type="entry name" value="C-terminal zinc-finger"/>
    <property type="match status" value="1"/>
</dbReference>
<dbReference type="Gene3D" id="3.30.40.10">
    <property type="entry name" value="Zinc/RING finger domain, C3HC4 (zinc finger)"/>
    <property type="match status" value="1"/>
</dbReference>
<dbReference type="InterPro" id="IPR045191">
    <property type="entry name" value="MBR1/2-like"/>
</dbReference>
<dbReference type="InterPro" id="IPR001841">
    <property type="entry name" value="Znf_RING"/>
</dbReference>
<dbReference type="InterPro" id="IPR013083">
    <property type="entry name" value="Znf_RING/FYVE/PHD"/>
</dbReference>
<dbReference type="PANTHER" id="PTHR22937">
    <property type="entry name" value="E3 UBIQUITIN-PROTEIN LIGASE RNF165"/>
    <property type="match status" value="1"/>
</dbReference>
<dbReference type="PANTHER" id="PTHR22937:SF67">
    <property type="entry name" value="E3 UBIQUITIN-PROTEIN LIGASE ZFP1-RELATED"/>
    <property type="match status" value="1"/>
</dbReference>
<dbReference type="Pfam" id="PF13639">
    <property type="entry name" value="zf-RING_2"/>
    <property type="match status" value="1"/>
</dbReference>
<dbReference type="SMART" id="SM00184">
    <property type="entry name" value="RING"/>
    <property type="match status" value="1"/>
</dbReference>
<dbReference type="SUPFAM" id="SSF57850">
    <property type="entry name" value="RING/U-box"/>
    <property type="match status" value="1"/>
</dbReference>
<dbReference type="PROSITE" id="PS50089">
    <property type="entry name" value="ZF_RING_2"/>
    <property type="match status" value="1"/>
</dbReference>
<reference key="1">
    <citation type="journal article" date="2002" name="Nature">
        <title>The genome sequence and structure of rice chromosome 1.</title>
        <authorList>
            <person name="Sasaki T."/>
            <person name="Matsumoto T."/>
            <person name="Yamamoto K."/>
            <person name="Sakata K."/>
            <person name="Baba T."/>
            <person name="Katayose Y."/>
            <person name="Wu J."/>
            <person name="Niimura Y."/>
            <person name="Cheng Z."/>
            <person name="Nagamura Y."/>
            <person name="Antonio B.A."/>
            <person name="Kanamori H."/>
            <person name="Hosokawa S."/>
            <person name="Masukawa M."/>
            <person name="Arikawa K."/>
            <person name="Chiden Y."/>
            <person name="Hayashi M."/>
            <person name="Okamoto M."/>
            <person name="Ando T."/>
            <person name="Aoki H."/>
            <person name="Arita K."/>
            <person name="Hamada M."/>
            <person name="Harada C."/>
            <person name="Hijishita S."/>
            <person name="Honda M."/>
            <person name="Ichikawa Y."/>
            <person name="Idonuma A."/>
            <person name="Iijima M."/>
            <person name="Ikeda M."/>
            <person name="Ikeno M."/>
            <person name="Ito S."/>
            <person name="Ito T."/>
            <person name="Ito Y."/>
            <person name="Ito Y."/>
            <person name="Iwabuchi A."/>
            <person name="Kamiya K."/>
            <person name="Karasawa W."/>
            <person name="Katagiri S."/>
            <person name="Kikuta A."/>
            <person name="Kobayashi N."/>
            <person name="Kono I."/>
            <person name="Machita K."/>
            <person name="Maehara T."/>
            <person name="Mizuno H."/>
            <person name="Mizubayashi T."/>
            <person name="Mukai Y."/>
            <person name="Nagasaki H."/>
            <person name="Nakashima M."/>
            <person name="Nakama Y."/>
            <person name="Nakamichi Y."/>
            <person name="Nakamura M."/>
            <person name="Namiki N."/>
            <person name="Negishi M."/>
            <person name="Ohta I."/>
            <person name="Ono N."/>
            <person name="Saji S."/>
            <person name="Sakai K."/>
            <person name="Shibata M."/>
            <person name="Shimokawa T."/>
            <person name="Shomura A."/>
            <person name="Song J."/>
            <person name="Takazaki Y."/>
            <person name="Terasawa K."/>
            <person name="Tsuji K."/>
            <person name="Waki K."/>
            <person name="Yamagata H."/>
            <person name="Yamane H."/>
            <person name="Yoshiki S."/>
            <person name="Yoshihara R."/>
            <person name="Yukawa K."/>
            <person name="Zhong H."/>
            <person name="Iwama H."/>
            <person name="Endo T."/>
            <person name="Ito H."/>
            <person name="Hahn J.H."/>
            <person name="Kim H.-I."/>
            <person name="Eun M.-Y."/>
            <person name="Yano M."/>
            <person name="Jiang J."/>
            <person name="Gojobori T."/>
        </authorList>
    </citation>
    <scope>NUCLEOTIDE SEQUENCE [LARGE SCALE GENOMIC DNA]</scope>
    <source>
        <strain>cv. Nipponbare</strain>
    </source>
</reference>
<reference key="2">
    <citation type="journal article" date="2005" name="Nature">
        <title>The map-based sequence of the rice genome.</title>
        <authorList>
            <consortium name="International rice genome sequencing project (IRGSP)"/>
        </authorList>
    </citation>
    <scope>NUCLEOTIDE SEQUENCE [LARGE SCALE GENOMIC DNA]</scope>
    <source>
        <strain>cv. Nipponbare</strain>
    </source>
</reference>
<reference key="3">
    <citation type="journal article" date="2008" name="Nucleic Acids Res.">
        <title>The rice annotation project database (RAP-DB): 2008 update.</title>
        <authorList>
            <consortium name="The rice annotation project (RAP)"/>
        </authorList>
    </citation>
    <scope>GENOME REANNOTATION</scope>
    <source>
        <strain>cv. Nipponbare</strain>
    </source>
</reference>
<reference key="4">
    <citation type="journal article" date="2013" name="Rice">
        <title>Improvement of the Oryza sativa Nipponbare reference genome using next generation sequence and optical map data.</title>
        <authorList>
            <person name="Kawahara Y."/>
            <person name="de la Bastide M."/>
            <person name="Hamilton J.P."/>
            <person name="Kanamori H."/>
            <person name="McCombie W.R."/>
            <person name="Ouyang S."/>
            <person name="Schwartz D.C."/>
            <person name="Tanaka T."/>
            <person name="Wu J."/>
            <person name="Zhou S."/>
            <person name="Childs K.L."/>
            <person name="Davidson R.M."/>
            <person name="Lin H."/>
            <person name="Quesada-Ocampo L."/>
            <person name="Vaillancourt B."/>
            <person name="Sakai H."/>
            <person name="Lee S.S."/>
            <person name="Kim J."/>
            <person name="Numa H."/>
            <person name="Itoh T."/>
            <person name="Buell C.R."/>
            <person name="Matsumoto T."/>
        </authorList>
    </citation>
    <scope>GENOME REANNOTATION</scope>
    <source>
        <strain>cv. Nipponbare</strain>
    </source>
</reference>
<reference key="5">
    <citation type="journal article" date="2005" name="PLoS Biol.">
        <title>The genomes of Oryza sativa: a history of duplications.</title>
        <authorList>
            <person name="Yu J."/>
            <person name="Wang J."/>
            <person name="Lin W."/>
            <person name="Li S."/>
            <person name="Li H."/>
            <person name="Zhou J."/>
            <person name="Ni P."/>
            <person name="Dong W."/>
            <person name="Hu S."/>
            <person name="Zeng C."/>
            <person name="Zhang J."/>
            <person name="Zhang Y."/>
            <person name="Li R."/>
            <person name="Xu Z."/>
            <person name="Li S."/>
            <person name="Li X."/>
            <person name="Zheng H."/>
            <person name="Cong L."/>
            <person name="Lin L."/>
            <person name="Yin J."/>
            <person name="Geng J."/>
            <person name="Li G."/>
            <person name="Shi J."/>
            <person name="Liu J."/>
            <person name="Lv H."/>
            <person name="Li J."/>
            <person name="Wang J."/>
            <person name="Deng Y."/>
            <person name="Ran L."/>
            <person name="Shi X."/>
            <person name="Wang X."/>
            <person name="Wu Q."/>
            <person name="Li C."/>
            <person name="Ren X."/>
            <person name="Wang J."/>
            <person name="Wang X."/>
            <person name="Li D."/>
            <person name="Liu D."/>
            <person name="Zhang X."/>
            <person name="Ji Z."/>
            <person name="Zhao W."/>
            <person name="Sun Y."/>
            <person name="Zhang Z."/>
            <person name="Bao J."/>
            <person name="Han Y."/>
            <person name="Dong L."/>
            <person name="Ji J."/>
            <person name="Chen P."/>
            <person name="Wu S."/>
            <person name="Liu J."/>
            <person name="Xiao Y."/>
            <person name="Bu D."/>
            <person name="Tan J."/>
            <person name="Yang L."/>
            <person name="Ye C."/>
            <person name="Zhang J."/>
            <person name="Xu J."/>
            <person name="Zhou Y."/>
            <person name="Yu Y."/>
            <person name="Zhang B."/>
            <person name="Zhuang S."/>
            <person name="Wei H."/>
            <person name="Liu B."/>
            <person name="Lei M."/>
            <person name="Yu H."/>
            <person name="Li Y."/>
            <person name="Xu H."/>
            <person name="Wei S."/>
            <person name="He X."/>
            <person name="Fang L."/>
            <person name="Zhang Z."/>
            <person name="Zhang Y."/>
            <person name="Huang X."/>
            <person name="Su Z."/>
            <person name="Tong W."/>
            <person name="Li J."/>
            <person name="Tong Z."/>
            <person name="Li S."/>
            <person name="Ye J."/>
            <person name="Wang L."/>
            <person name="Fang L."/>
            <person name="Lei T."/>
            <person name="Chen C.-S."/>
            <person name="Chen H.-C."/>
            <person name="Xu Z."/>
            <person name="Li H."/>
            <person name="Huang H."/>
            <person name="Zhang F."/>
            <person name="Xu H."/>
            <person name="Li N."/>
            <person name="Zhao C."/>
            <person name="Li S."/>
            <person name="Dong L."/>
            <person name="Huang Y."/>
            <person name="Li L."/>
            <person name="Xi Y."/>
            <person name="Qi Q."/>
            <person name="Li W."/>
            <person name="Zhang B."/>
            <person name="Hu W."/>
            <person name="Zhang Y."/>
            <person name="Tian X."/>
            <person name="Jiao Y."/>
            <person name="Liang X."/>
            <person name="Jin J."/>
            <person name="Gao L."/>
            <person name="Zheng W."/>
            <person name="Hao B."/>
            <person name="Liu S.-M."/>
            <person name="Wang W."/>
            <person name="Yuan L."/>
            <person name="Cao M."/>
            <person name="McDermott J."/>
            <person name="Samudrala R."/>
            <person name="Wang J."/>
            <person name="Wong G.K.-S."/>
            <person name="Yang H."/>
        </authorList>
    </citation>
    <scope>NUCLEOTIDE SEQUENCE [LARGE SCALE GENOMIC DNA]</scope>
    <source>
        <strain>cv. Nipponbare</strain>
    </source>
</reference>
<reference key="6">
    <citation type="journal article" date="2003" name="Science">
        <title>Collection, mapping, and annotation of over 28,000 cDNA clones from japonica rice.</title>
        <authorList>
            <consortium name="The rice full-length cDNA consortium"/>
        </authorList>
    </citation>
    <scope>NUCLEOTIDE SEQUENCE [LARGE SCALE MRNA] (ISOFORMS 1 AND 2)</scope>
    <source>
        <strain>cv. Nipponbare</strain>
    </source>
</reference>
<reference key="7">
    <citation type="journal article" date="2016" name="Physiol. Plantarum">
        <title>Molecular dissection of Oryza sativa salt-induced RING Finger Protein 1 (OsSIRP1): possible involvement in the sensitivity response to salinity stress.</title>
        <authorList>
            <person name="Hwang S.G."/>
            <person name="Kim J.J."/>
            <person name="Lim S.D."/>
            <person name="Park Y.C."/>
            <person name="Moon J.C."/>
            <person name="Jang C.S."/>
        </authorList>
    </citation>
    <scope>LACK OF INDUCTION BY SALT STRESS</scope>
</reference>
<reference key="8">
    <citation type="journal article" date="2018" name="Mol. Plant Pathol.">
        <title>The DnaJ protein OsDjA6 negatively regulates rice innate immunity to the blast fungus Magnaporthe oryzae.</title>
        <authorList>
            <person name="Zhong X."/>
            <person name="Yang J."/>
            <person name="Shi Y."/>
            <person name="Wang X."/>
            <person name="Wang G.L."/>
        </authorList>
    </citation>
    <scope>INTERACTION WITH DJA6</scope>
    <scope>MUTAGENESIS OF HIS-491</scope>
</reference>
<accession>Q5QLR5</accession>
<accession>Q5QLR6</accession>
<comment type="function">
    <text evidence="2">Probable E3 ubiquitin-protein ligase.</text>
</comment>
<comment type="catalytic activity">
    <reaction evidence="2">
        <text>S-ubiquitinyl-[E2 ubiquitin-conjugating enzyme]-L-cysteine + [acceptor protein]-L-lysine = [E2 ubiquitin-conjugating enzyme]-L-cysteine + N(6)-ubiquitinyl-[acceptor protein]-L-lysine.</text>
        <dbReference type="EC" id="2.3.2.27"/>
    </reaction>
</comment>
<comment type="pathway">
    <text evidence="8">Protein modification; protein ubiquitination.</text>
</comment>
<comment type="subunit">
    <text evidence="6">Interacts with DJA6.</text>
</comment>
<comment type="alternative products">
    <event type="alternative splicing"/>
    <isoform>
        <id>Q5QLR5-1</id>
        <name>1</name>
        <sequence type="displayed"/>
    </isoform>
    <isoform>
        <id>Q5QLR5-2</id>
        <name>2</name>
        <sequence type="described" ref="VSP_058965"/>
    </isoform>
</comment>
<comment type="induction">
    <text evidence="5">Not induced by salt stress.</text>
</comment>
<comment type="domain">
    <text evidence="1">The RING-type zinc finger domain mediates binding to an E2 ubiquitin-conjugating enzyme.</text>
</comment>
<comment type="miscellaneous">
    <molecule>Isoform 2</molecule>
    <text evidence="8">May be due to a competing acceptor splice site.</text>
</comment>
<comment type="similarity">
    <text evidence="8">Belongs to the RING-type zinc finger family.</text>
</comment>
<organism>
    <name type="scientific">Oryza sativa subsp. japonica</name>
    <name type="common">Rice</name>
    <dbReference type="NCBI Taxonomy" id="39947"/>
    <lineage>
        <taxon>Eukaryota</taxon>
        <taxon>Viridiplantae</taxon>
        <taxon>Streptophyta</taxon>
        <taxon>Embryophyta</taxon>
        <taxon>Tracheophyta</taxon>
        <taxon>Spermatophyta</taxon>
        <taxon>Magnoliopsida</taxon>
        <taxon>Liliopsida</taxon>
        <taxon>Poales</taxon>
        <taxon>Poaceae</taxon>
        <taxon>BOP clade</taxon>
        <taxon>Oryzoideae</taxon>
        <taxon>Oryzeae</taxon>
        <taxon>Oryzinae</taxon>
        <taxon>Oryza</taxon>
        <taxon>Oryza sativa</taxon>
    </lineage>
</organism>
<sequence length="523" mass="57682">MAYRNTVCTPQVIDLETEQGHSHIHSESFNRTGNDSSDQGAQHAVRGVGNATNIGLSDMRSYYDAGMNHPHQPVHNLPPNLGVDSGFVFPSSMYNPCMSTTSMNQYVSHTQSFGLPSNQVVLGSMDEGSRNENAGESARGFIKRKNAAVAGSYHCANGFASSSSSHASLNPTHRPWDPSFESNVLPNTASYNPSEYHSQTSWPSMEGSSIPSNGFNLMGAHPESAQHGNYAFPTSHISQCFQPTSNTWISQSANGIADGIPQWEYVNGMNNAPGRFSRSGMTETVNGSFREYQNGPSTLCRGPLPYFHQHAGMHAHNLLDHTQVQAPYQQCHNNPVLHGVNHSGNRFHLGPRIPVLFSNSERTFGPPHHPLLANPVNHRNIRILPPEHATIMDFSRLYEVSNVVDEHRDMRLDIDSMTYEELLALEEQIGDVNTGLAKSYIVEKLKTSLFVPGSSCMSNKSSESSMENDACIICQEEYQVKECIGTLDCGHRYHEDCIKQWLMVKNLCPICKTTALSTGRRSG</sequence>
<feature type="chain" id="PRO_0000440261" description="Probable E3 ubiquitin-protein ligase ZFP1">
    <location>
        <begin position="1"/>
        <end position="523"/>
    </location>
</feature>
<feature type="zinc finger region" description="RING-type; atypical" evidence="3">
    <location>
        <begin position="471"/>
        <end position="512"/>
    </location>
</feature>
<feature type="region of interest" description="Disordered" evidence="4">
    <location>
        <begin position="18"/>
        <end position="43"/>
    </location>
</feature>
<feature type="compositionally biased region" description="Basic and acidic residues" evidence="4">
    <location>
        <begin position="18"/>
        <end position="28"/>
    </location>
</feature>
<feature type="compositionally biased region" description="Polar residues" evidence="4">
    <location>
        <begin position="29"/>
        <end position="40"/>
    </location>
</feature>
<feature type="splice variant" id="VSP_058965" description="In isoform 2.">
    <original>P</original>
    <variation>PA</variation>
    <location>
        <position position="273"/>
    </location>
</feature>
<feature type="mutagenesis site" description="Increases protein stability." evidence="6">
    <original>H</original>
    <variation>Y</variation>
    <location>
        <position position="491"/>
    </location>
</feature>
<proteinExistence type="evidence at protein level"/>
<gene>
    <name evidence="7" type="primary">ZFP1</name>
    <name evidence="11" type="ordered locus">Os01g0667700</name>
    <name evidence="8" type="ordered locus">LOC_Os01g47740</name>
    <name evidence="12" type="ORF">OsJ_02947</name>
    <name evidence="9" type="ORF">OSJNBb0063G05.28-1</name>
    <name evidence="10" type="ORF">OSJNBb0063G05.28-2</name>
</gene>
<name>ZFP1_ORYSJ</name>
<protein>
    <recommendedName>
        <fullName evidence="8">Probable E3 ubiquitin-protein ligase ZFP1</fullName>
        <shortName evidence="7">OsZFP1</shortName>
        <ecNumber evidence="8">2.3.2.27</ecNumber>
    </recommendedName>
</protein>